<protein>
    <recommendedName>
        <fullName evidence="1">Histidine--tRNA ligase</fullName>
        <ecNumber evidence="1">6.1.1.21</ecNumber>
    </recommendedName>
    <alternativeName>
        <fullName evidence="1">Histidyl-tRNA synthetase</fullName>
        <shortName evidence="1">HisRS</shortName>
    </alternativeName>
</protein>
<reference key="1">
    <citation type="submission" date="2009-01" db="EMBL/GenBank/DDBJ databases">
        <title>Complete sequence of Diaphorobacter sp. TPSY.</title>
        <authorList>
            <consortium name="US DOE Joint Genome Institute"/>
            <person name="Lucas S."/>
            <person name="Copeland A."/>
            <person name="Lapidus A."/>
            <person name="Glavina del Rio T."/>
            <person name="Tice H."/>
            <person name="Bruce D."/>
            <person name="Goodwin L."/>
            <person name="Pitluck S."/>
            <person name="Chertkov O."/>
            <person name="Brettin T."/>
            <person name="Detter J.C."/>
            <person name="Han C."/>
            <person name="Larimer F."/>
            <person name="Land M."/>
            <person name="Hauser L."/>
            <person name="Kyrpides N."/>
            <person name="Mikhailova N."/>
            <person name="Coates J.D."/>
        </authorList>
    </citation>
    <scope>NUCLEOTIDE SEQUENCE [LARGE SCALE GENOMIC DNA]</scope>
    <source>
        <strain>TPSY</strain>
    </source>
</reference>
<dbReference type="EC" id="6.1.1.21" evidence="1"/>
<dbReference type="EMBL" id="CP001392">
    <property type="protein sequence ID" value="ACM32568.1"/>
    <property type="molecule type" value="Genomic_DNA"/>
</dbReference>
<dbReference type="RefSeq" id="WP_015912791.1">
    <property type="nucleotide sequence ID" value="NC_011992.1"/>
</dbReference>
<dbReference type="SMR" id="B9MFX7"/>
<dbReference type="KEGG" id="dia:Dtpsy_1091"/>
<dbReference type="eggNOG" id="COG0124">
    <property type="taxonomic scope" value="Bacteria"/>
</dbReference>
<dbReference type="HOGENOM" id="CLU_025113_1_1_4"/>
<dbReference type="Proteomes" id="UP000000450">
    <property type="component" value="Chromosome"/>
</dbReference>
<dbReference type="GO" id="GO:0005737">
    <property type="term" value="C:cytoplasm"/>
    <property type="evidence" value="ECO:0007669"/>
    <property type="project" value="UniProtKB-SubCell"/>
</dbReference>
<dbReference type="GO" id="GO:0005524">
    <property type="term" value="F:ATP binding"/>
    <property type="evidence" value="ECO:0007669"/>
    <property type="project" value="UniProtKB-UniRule"/>
</dbReference>
<dbReference type="GO" id="GO:0004821">
    <property type="term" value="F:histidine-tRNA ligase activity"/>
    <property type="evidence" value="ECO:0007669"/>
    <property type="project" value="UniProtKB-UniRule"/>
</dbReference>
<dbReference type="GO" id="GO:0006427">
    <property type="term" value="P:histidyl-tRNA aminoacylation"/>
    <property type="evidence" value="ECO:0007669"/>
    <property type="project" value="UniProtKB-UniRule"/>
</dbReference>
<dbReference type="CDD" id="cd00773">
    <property type="entry name" value="HisRS-like_core"/>
    <property type="match status" value="1"/>
</dbReference>
<dbReference type="FunFam" id="3.30.930.10:FF:000005">
    <property type="entry name" value="Histidine--tRNA ligase"/>
    <property type="match status" value="1"/>
</dbReference>
<dbReference type="Gene3D" id="3.40.50.800">
    <property type="entry name" value="Anticodon-binding domain"/>
    <property type="match status" value="1"/>
</dbReference>
<dbReference type="Gene3D" id="3.30.930.10">
    <property type="entry name" value="Bira Bifunctional Protein, Domain 2"/>
    <property type="match status" value="1"/>
</dbReference>
<dbReference type="HAMAP" id="MF_00127">
    <property type="entry name" value="His_tRNA_synth"/>
    <property type="match status" value="1"/>
</dbReference>
<dbReference type="InterPro" id="IPR006195">
    <property type="entry name" value="aa-tRNA-synth_II"/>
</dbReference>
<dbReference type="InterPro" id="IPR045864">
    <property type="entry name" value="aa-tRNA-synth_II/BPL/LPL"/>
</dbReference>
<dbReference type="InterPro" id="IPR004154">
    <property type="entry name" value="Anticodon-bd"/>
</dbReference>
<dbReference type="InterPro" id="IPR036621">
    <property type="entry name" value="Anticodon-bd_dom_sf"/>
</dbReference>
<dbReference type="InterPro" id="IPR015807">
    <property type="entry name" value="His-tRNA-ligase"/>
</dbReference>
<dbReference type="InterPro" id="IPR041715">
    <property type="entry name" value="HisRS-like_core"/>
</dbReference>
<dbReference type="InterPro" id="IPR004516">
    <property type="entry name" value="HisRS/HisZ"/>
</dbReference>
<dbReference type="NCBIfam" id="TIGR00442">
    <property type="entry name" value="hisS"/>
    <property type="match status" value="1"/>
</dbReference>
<dbReference type="PANTHER" id="PTHR43707:SF1">
    <property type="entry name" value="HISTIDINE--TRNA LIGASE, MITOCHONDRIAL-RELATED"/>
    <property type="match status" value="1"/>
</dbReference>
<dbReference type="PANTHER" id="PTHR43707">
    <property type="entry name" value="HISTIDYL-TRNA SYNTHETASE"/>
    <property type="match status" value="1"/>
</dbReference>
<dbReference type="Pfam" id="PF03129">
    <property type="entry name" value="HGTP_anticodon"/>
    <property type="match status" value="1"/>
</dbReference>
<dbReference type="Pfam" id="PF13393">
    <property type="entry name" value="tRNA-synt_His"/>
    <property type="match status" value="1"/>
</dbReference>
<dbReference type="PIRSF" id="PIRSF001549">
    <property type="entry name" value="His-tRNA_synth"/>
    <property type="match status" value="1"/>
</dbReference>
<dbReference type="SUPFAM" id="SSF52954">
    <property type="entry name" value="Class II aaRS ABD-related"/>
    <property type="match status" value="1"/>
</dbReference>
<dbReference type="SUPFAM" id="SSF55681">
    <property type="entry name" value="Class II aaRS and biotin synthetases"/>
    <property type="match status" value="1"/>
</dbReference>
<dbReference type="PROSITE" id="PS50862">
    <property type="entry name" value="AA_TRNA_LIGASE_II"/>
    <property type="match status" value="1"/>
</dbReference>
<evidence type="ECO:0000255" key="1">
    <source>
        <dbReference type="HAMAP-Rule" id="MF_00127"/>
    </source>
</evidence>
<accession>B9MFX7</accession>
<name>SYH_ACIET</name>
<feature type="chain" id="PRO_1000199127" description="Histidine--tRNA ligase">
    <location>
        <begin position="1"/>
        <end position="429"/>
    </location>
</feature>
<comment type="catalytic activity">
    <reaction evidence="1">
        <text>tRNA(His) + L-histidine + ATP = L-histidyl-tRNA(His) + AMP + diphosphate + H(+)</text>
        <dbReference type="Rhea" id="RHEA:17313"/>
        <dbReference type="Rhea" id="RHEA-COMP:9665"/>
        <dbReference type="Rhea" id="RHEA-COMP:9689"/>
        <dbReference type="ChEBI" id="CHEBI:15378"/>
        <dbReference type="ChEBI" id="CHEBI:30616"/>
        <dbReference type="ChEBI" id="CHEBI:33019"/>
        <dbReference type="ChEBI" id="CHEBI:57595"/>
        <dbReference type="ChEBI" id="CHEBI:78442"/>
        <dbReference type="ChEBI" id="CHEBI:78527"/>
        <dbReference type="ChEBI" id="CHEBI:456215"/>
        <dbReference type="EC" id="6.1.1.21"/>
    </reaction>
</comment>
<comment type="subunit">
    <text evidence="1">Homodimer.</text>
</comment>
<comment type="subcellular location">
    <subcellularLocation>
        <location evidence="1">Cytoplasm</location>
    </subcellularLocation>
</comment>
<comment type="similarity">
    <text evidence="1">Belongs to the class-II aminoacyl-tRNA synthetase family.</text>
</comment>
<keyword id="KW-0030">Aminoacyl-tRNA synthetase</keyword>
<keyword id="KW-0067">ATP-binding</keyword>
<keyword id="KW-0963">Cytoplasm</keyword>
<keyword id="KW-0436">Ligase</keyword>
<keyword id="KW-0547">Nucleotide-binding</keyword>
<keyword id="KW-0648">Protein biosynthesis</keyword>
<keyword id="KW-1185">Reference proteome</keyword>
<sequence length="429" mass="47532">MQKLVAIKGMNDILPPDSARWEWLEDKVRTLMARYAYRNIRTPIVEPTPLFVRGLGEVTDIVEKEMYSFEDRLNGEQLTLRPEATAGVVRAVVEHSMLYDGGKRLYYMGPMFRHERPQRGRYRQFHQIGAEALGFPGAEADAEIILLAHALWAELGLENVRLELNSLGQPDERRAHRAALIAYLEQHMDVLDEDARRRLHSNPLRILDTKNPAMQALVEGAPRLIDFLGEASLQHFETVKAILDANGVAWSLNPRLVRGMDYYNLTVFEFVTDQLGSQGTICGGGRYDYLIEQIGGKFAPAVGWALGVERVLELLKEQETQVARPAADAYAVVPDASALPVVMAALQRLRAQGVSVQMHSPTAAGEGMGSMKSQFKKADASGARYALVFGADELARGAVTVKPLRDSGEQAERPLAALAEWAATLQSSR</sequence>
<proteinExistence type="inferred from homology"/>
<organism>
    <name type="scientific">Acidovorax ebreus (strain TPSY)</name>
    <name type="common">Diaphorobacter sp. (strain TPSY)</name>
    <dbReference type="NCBI Taxonomy" id="535289"/>
    <lineage>
        <taxon>Bacteria</taxon>
        <taxon>Pseudomonadati</taxon>
        <taxon>Pseudomonadota</taxon>
        <taxon>Betaproteobacteria</taxon>
        <taxon>Burkholderiales</taxon>
        <taxon>Comamonadaceae</taxon>
        <taxon>Diaphorobacter</taxon>
    </lineage>
</organism>
<gene>
    <name evidence="1" type="primary">hisS</name>
    <name type="ordered locus">Dtpsy_1091</name>
</gene>